<sequence>MLVLGIESSCDETGVAVYDSESGLLSHALHSQIATHRVHGGVVPELASRDHVNYLVPLVDEVLTKAKIRKNQLDGIAYTAGPGLIGALLVGSCFAKSLAYALNIPALAIHHLEAHLLAAKMETPSLDFPFIALLVSGGHCQLIEVNNIGEYRLLGDTLDDAVGEAFDKTAKLMGIPYPGGAVLANLADQCLSTPYQFPRPMTDRPGLDFSFSGLKTHALNTWNQSAKKQGDRSEIAKAFQQAVVETLIIKCKRAIKESQSKRLVVAGGVGANKALRSALQKWINDIKGEVYFPALEYCTDNGAMVAYAGCLRMMRGESDGGLGVMVKPRWPLA</sequence>
<dbReference type="EC" id="2.3.1.234" evidence="1"/>
<dbReference type="EMBL" id="CR628337">
    <property type="protein sequence ID" value="CAH16519.1"/>
    <property type="molecule type" value="Genomic_DNA"/>
</dbReference>
<dbReference type="RefSeq" id="WP_011216249.1">
    <property type="nucleotide sequence ID" value="NC_006369.1"/>
</dbReference>
<dbReference type="SMR" id="Q5WU89"/>
<dbReference type="KEGG" id="lpf:lpl2279"/>
<dbReference type="LegioList" id="lpl2279"/>
<dbReference type="HOGENOM" id="CLU_023208_0_0_6"/>
<dbReference type="Proteomes" id="UP000002517">
    <property type="component" value="Chromosome"/>
</dbReference>
<dbReference type="GO" id="GO:0005737">
    <property type="term" value="C:cytoplasm"/>
    <property type="evidence" value="ECO:0007669"/>
    <property type="project" value="UniProtKB-SubCell"/>
</dbReference>
<dbReference type="GO" id="GO:0005506">
    <property type="term" value="F:iron ion binding"/>
    <property type="evidence" value="ECO:0007669"/>
    <property type="project" value="UniProtKB-UniRule"/>
</dbReference>
<dbReference type="GO" id="GO:0061711">
    <property type="term" value="F:N(6)-L-threonylcarbamoyladenine synthase activity"/>
    <property type="evidence" value="ECO:0007669"/>
    <property type="project" value="UniProtKB-EC"/>
</dbReference>
<dbReference type="GO" id="GO:0002949">
    <property type="term" value="P:tRNA threonylcarbamoyladenosine modification"/>
    <property type="evidence" value="ECO:0007669"/>
    <property type="project" value="UniProtKB-UniRule"/>
</dbReference>
<dbReference type="CDD" id="cd24133">
    <property type="entry name" value="ASKHA_NBD_TsaD_bac"/>
    <property type="match status" value="1"/>
</dbReference>
<dbReference type="FunFam" id="3.30.420.40:FF:000012">
    <property type="entry name" value="tRNA N6-adenosine threonylcarbamoyltransferase"/>
    <property type="match status" value="1"/>
</dbReference>
<dbReference type="FunFam" id="3.30.420.40:FF:000040">
    <property type="entry name" value="tRNA N6-adenosine threonylcarbamoyltransferase"/>
    <property type="match status" value="1"/>
</dbReference>
<dbReference type="Gene3D" id="3.30.420.40">
    <property type="match status" value="2"/>
</dbReference>
<dbReference type="HAMAP" id="MF_01445">
    <property type="entry name" value="TsaD"/>
    <property type="match status" value="1"/>
</dbReference>
<dbReference type="InterPro" id="IPR043129">
    <property type="entry name" value="ATPase_NBD"/>
</dbReference>
<dbReference type="InterPro" id="IPR000905">
    <property type="entry name" value="Gcp-like_dom"/>
</dbReference>
<dbReference type="InterPro" id="IPR017861">
    <property type="entry name" value="KAE1/TsaD"/>
</dbReference>
<dbReference type="InterPro" id="IPR017860">
    <property type="entry name" value="Peptidase_M22_CS"/>
</dbReference>
<dbReference type="InterPro" id="IPR022450">
    <property type="entry name" value="TsaD"/>
</dbReference>
<dbReference type="NCBIfam" id="TIGR00329">
    <property type="entry name" value="gcp_kae1"/>
    <property type="match status" value="1"/>
</dbReference>
<dbReference type="NCBIfam" id="TIGR03723">
    <property type="entry name" value="T6A_TsaD_YgjD"/>
    <property type="match status" value="1"/>
</dbReference>
<dbReference type="PANTHER" id="PTHR11735">
    <property type="entry name" value="TRNA N6-ADENOSINE THREONYLCARBAMOYLTRANSFERASE"/>
    <property type="match status" value="1"/>
</dbReference>
<dbReference type="PANTHER" id="PTHR11735:SF6">
    <property type="entry name" value="TRNA N6-ADENOSINE THREONYLCARBAMOYLTRANSFERASE, MITOCHONDRIAL"/>
    <property type="match status" value="1"/>
</dbReference>
<dbReference type="Pfam" id="PF00814">
    <property type="entry name" value="TsaD"/>
    <property type="match status" value="1"/>
</dbReference>
<dbReference type="PRINTS" id="PR00789">
    <property type="entry name" value="OSIALOPTASE"/>
</dbReference>
<dbReference type="SUPFAM" id="SSF53067">
    <property type="entry name" value="Actin-like ATPase domain"/>
    <property type="match status" value="1"/>
</dbReference>
<dbReference type="PROSITE" id="PS01016">
    <property type="entry name" value="GLYCOPROTEASE"/>
    <property type="match status" value="1"/>
</dbReference>
<feature type="chain" id="PRO_0000303403" description="tRNA N6-adenosine threonylcarbamoyltransferase">
    <location>
        <begin position="1"/>
        <end position="333"/>
    </location>
</feature>
<feature type="binding site" evidence="1">
    <location>
        <position position="111"/>
    </location>
    <ligand>
        <name>Fe cation</name>
        <dbReference type="ChEBI" id="CHEBI:24875"/>
    </ligand>
</feature>
<feature type="binding site" evidence="1">
    <location>
        <position position="115"/>
    </location>
    <ligand>
        <name>Fe cation</name>
        <dbReference type="ChEBI" id="CHEBI:24875"/>
    </ligand>
</feature>
<feature type="binding site" evidence="1">
    <location>
        <begin position="134"/>
        <end position="138"/>
    </location>
    <ligand>
        <name>substrate</name>
    </ligand>
</feature>
<feature type="binding site" evidence="1">
    <location>
        <position position="167"/>
    </location>
    <ligand>
        <name>substrate</name>
    </ligand>
</feature>
<feature type="binding site" evidence="1">
    <location>
        <position position="180"/>
    </location>
    <ligand>
        <name>substrate</name>
    </ligand>
</feature>
<feature type="binding site" evidence="1">
    <location>
        <position position="272"/>
    </location>
    <ligand>
        <name>substrate</name>
    </ligand>
</feature>
<feature type="binding site" evidence="1">
    <location>
        <position position="300"/>
    </location>
    <ligand>
        <name>Fe cation</name>
        <dbReference type="ChEBI" id="CHEBI:24875"/>
    </ligand>
</feature>
<name>TSAD_LEGPL</name>
<accession>Q5WU89</accession>
<protein>
    <recommendedName>
        <fullName evidence="1">tRNA N6-adenosine threonylcarbamoyltransferase</fullName>
        <ecNumber evidence="1">2.3.1.234</ecNumber>
    </recommendedName>
    <alternativeName>
        <fullName evidence="1">N6-L-threonylcarbamoyladenine synthase</fullName>
        <shortName evidence="1">t(6)A synthase</shortName>
    </alternativeName>
    <alternativeName>
        <fullName evidence="1">t(6)A37 threonylcarbamoyladenosine biosynthesis protein TsaD</fullName>
    </alternativeName>
    <alternativeName>
        <fullName evidence="1">tRNA threonylcarbamoyladenosine biosynthesis protein TsaD</fullName>
    </alternativeName>
</protein>
<proteinExistence type="inferred from homology"/>
<reference key="1">
    <citation type="journal article" date="2004" name="Nat. Genet.">
        <title>Evidence in the Legionella pneumophila genome for exploitation of host cell functions and high genome plasticity.</title>
        <authorList>
            <person name="Cazalet C."/>
            <person name="Rusniok C."/>
            <person name="Brueggemann H."/>
            <person name="Zidane N."/>
            <person name="Magnier A."/>
            <person name="Ma L."/>
            <person name="Tichit M."/>
            <person name="Jarraud S."/>
            <person name="Bouchier C."/>
            <person name="Vandenesch F."/>
            <person name="Kunst F."/>
            <person name="Etienne J."/>
            <person name="Glaser P."/>
            <person name="Buchrieser C."/>
        </authorList>
    </citation>
    <scope>NUCLEOTIDE SEQUENCE [LARGE SCALE GENOMIC DNA]</scope>
    <source>
        <strain>Lens</strain>
    </source>
</reference>
<organism>
    <name type="scientific">Legionella pneumophila (strain Lens)</name>
    <dbReference type="NCBI Taxonomy" id="297245"/>
    <lineage>
        <taxon>Bacteria</taxon>
        <taxon>Pseudomonadati</taxon>
        <taxon>Pseudomonadota</taxon>
        <taxon>Gammaproteobacteria</taxon>
        <taxon>Legionellales</taxon>
        <taxon>Legionellaceae</taxon>
        <taxon>Legionella</taxon>
    </lineage>
</organism>
<comment type="function">
    <text evidence="1">Required for the formation of a threonylcarbamoyl group on adenosine at position 37 (t(6)A37) in tRNAs that read codons beginning with adenine. Is involved in the transfer of the threonylcarbamoyl moiety of threonylcarbamoyl-AMP (TC-AMP) to the N6 group of A37, together with TsaE and TsaB. TsaD likely plays a direct catalytic role in this reaction.</text>
</comment>
<comment type="catalytic activity">
    <reaction evidence="1">
        <text>L-threonylcarbamoyladenylate + adenosine(37) in tRNA = N(6)-L-threonylcarbamoyladenosine(37) in tRNA + AMP + H(+)</text>
        <dbReference type="Rhea" id="RHEA:37059"/>
        <dbReference type="Rhea" id="RHEA-COMP:10162"/>
        <dbReference type="Rhea" id="RHEA-COMP:10163"/>
        <dbReference type="ChEBI" id="CHEBI:15378"/>
        <dbReference type="ChEBI" id="CHEBI:73682"/>
        <dbReference type="ChEBI" id="CHEBI:74411"/>
        <dbReference type="ChEBI" id="CHEBI:74418"/>
        <dbReference type="ChEBI" id="CHEBI:456215"/>
        <dbReference type="EC" id="2.3.1.234"/>
    </reaction>
</comment>
<comment type="cofactor">
    <cofactor evidence="1">
        <name>Fe(2+)</name>
        <dbReference type="ChEBI" id="CHEBI:29033"/>
    </cofactor>
    <text evidence="1">Binds 1 Fe(2+) ion per subunit.</text>
</comment>
<comment type="subcellular location">
    <subcellularLocation>
        <location evidence="1">Cytoplasm</location>
    </subcellularLocation>
</comment>
<comment type="similarity">
    <text evidence="1">Belongs to the KAE1 / TsaD family.</text>
</comment>
<evidence type="ECO:0000255" key="1">
    <source>
        <dbReference type="HAMAP-Rule" id="MF_01445"/>
    </source>
</evidence>
<gene>
    <name evidence="1" type="primary">tsaD</name>
    <name type="synonym">gcp</name>
    <name type="ordered locus">lpl2279</name>
</gene>
<keyword id="KW-0012">Acyltransferase</keyword>
<keyword id="KW-0963">Cytoplasm</keyword>
<keyword id="KW-0408">Iron</keyword>
<keyword id="KW-0479">Metal-binding</keyword>
<keyword id="KW-0808">Transferase</keyword>
<keyword id="KW-0819">tRNA processing</keyword>